<organism>
    <name type="scientific">Staphylococcus aureus (strain Mu50 / ATCC 700699)</name>
    <dbReference type="NCBI Taxonomy" id="158878"/>
    <lineage>
        <taxon>Bacteria</taxon>
        <taxon>Bacillati</taxon>
        <taxon>Bacillota</taxon>
        <taxon>Bacilli</taxon>
        <taxon>Bacillales</taxon>
        <taxon>Staphylococcaceae</taxon>
        <taxon>Staphylococcus</taxon>
    </lineage>
</organism>
<gene>
    <name type="primary">mnhG2</name>
    <name type="synonym">mrpG2</name>
    <name type="ordered locus">SAV0628</name>
</gene>
<dbReference type="EMBL" id="BA000017">
    <property type="protein sequence ID" value="BAB56790.1"/>
    <property type="molecule type" value="Genomic_DNA"/>
</dbReference>
<dbReference type="RefSeq" id="WP_000406612.1">
    <property type="nucleotide sequence ID" value="NC_002758.2"/>
</dbReference>
<dbReference type="SMR" id="Q99VY6"/>
<dbReference type="KEGG" id="sav:SAV0628"/>
<dbReference type="HOGENOM" id="CLU_121334_0_3_9"/>
<dbReference type="PhylomeDB" id="Q99VY6"/>
<dbReference type="Proteomes" id="UP000002481">
    <property type="component" value="Chromosome"/>
</dbReference>
<dbReference type="GO" id="GO:0005886">
    <property type="term" value="C:plasma membrane"/>
    <property type="evidence" value="ECO:0007669"/>
    <property type="project" value="UniProtKB-SubCell"/>
</dbReference>
<dbReference type="GO" id="GO:0015385">
    <property type="term" value="F:sodium:proton antiporter activity"/>
    <property type="evidence" value="ECO:0007669"/>
    <property type="project" value="TreeGrafter"/>
</dbReference>
<dbReference type="InterPro" id="IPR005133">
    <property type="entry name" value="PhaG_MnhG_YufB"/>
</dbReference>
<dbReference type="NCBIfam" id="TIGR01300">
    <property type="entry name" value="CPA3_mnhG_phaG"/>
    <property type="match status" value="1"/>
</dbReference>
<dbReference type="NCBIfam" id="NF009236">
    <property type="entry name" value="PRK12586.1"/>
    <property type="match status" value="1"/>
</dbReference>
<dbReference type="NCBIfam" id="NF009314">
    <property type="entry name" value="PRK12674.1-2"/>
    <property type="match status" value="1"/>
</dbReference>
<dbReference type="PANTHER" id="PTHR34703">
    <property type="entry name" value="ANTIPORTER SUBUNIT MNHG2-RELATED"/>
    <property type="match status" value="1"/>
</dbReference>
<dbReference type="PANTHER" id="PTHR34703:SF1">
    <property type="entry name" value="ANTIPORTER SUBUNIT MNHG2-RELATED"/>
    <property type="match status" value="1"/>
</dbReference>
<dbReference type="Pfam" id="PF03334">
    <property type="entry name" value="PhaG_MnhG_YufB"/>
    <property type="match status" value="1"/>
</dbReference>
<feature type="chain" id="PRO_0000372179" description="Putative antiporter subunit mnhG2">
    <location>
        <begin position="1"/>
        <end position="145"/>
    </location>
</feature>
<feature type="transmembrane region" description="Helical" evidence="2">
    <location>
        <begin position="11"/>
        <end position="31"/>
    </location>
</feature>
<feature type="transmembrane region" description="Helical" evidence="2">
    <location>
        <begin position="51"/>
        <end position="71"/>
    </location>
</feature>
<feature type="transmembrane region" description="Helical" evidence="2">
    <location>
        <begin position="72"/>
        <end position="92"/>
    </location>
</feature>
<protein>
    <recommendedName>
        <fullName>Putative antiporter subunit mnhG2</fullName>
    </recommendedName>
    <alternativeName>
        <fullName>Mrp complex subunit G2</fullName>
    </alternativeName>
    <alternativeName>
        <fullName>Putative NADH-ubiquinone oxidoreductase subunit mnhF2</fullName>
    </alternativeName>
</protein>
<accession>Q99VY6</accession>
<sequence length="145" mass="16302">MEITKEIFSLIAAVMLLLGSFIALISAIGIVKFQDVFLRSHAATKSSTLSVLLTLIGVLIYFIVNTGFFSVRLLLSLVFINLTSPVGMHLVARAAYRNGAYMYRKNDAHTHASILLSSNEQNSTEALQLRAKKREEHRKKWYQND</sequence>
<proteinExistence type="inferred from homology"/>
<keyword id="KW-0050">Antiport</keyword>
<keyword id="KW-1003">Cell membrane</keyword>
<keyword id="KW-0406">Ion transport</keyword>
<keyword id="KW-0472">Membrane</keyword>
<keyword id="KW-0812">Transmembrane</keyword>
<keyword id="KW-1133">Transmembrane helix</keyword>
<keyword id="KW-0813">Transport</keyword>
<comment type="subunit">
    <text evidence="1">May form a heterooligomeric complex that consists of seven subunits: mnhA2, mnhB2, mnhC2, mnhD2, mnhE2, mnhF2 and mnhG2.</text>
</comment>
<comment type="subcellular location">
    <subcellularLocation>
        <location evidence="3">Cell membrane</location>
        <topology evidence="3">Multi-pass membrane protein</topology>
    </subcellularLocation>
</comment>
<comment type="similarity">
    <text evidence="3">Belongs to the CPA3 antiporters (TC 2.A.63) subunit G family.</text>
</comment>
<name>MNHG2_STAAM</name>
<reference key="1">
    <citation type="journal article" date="2001" name="Lancet">
        <title>Whole genome sequencing of meticillin-resistant Staphylococcus aureus.</title>
        <authorList>
            <person name="Kuroda M."/>
            <person name="Ohta T."/>
            <person name="Uchiyama I."/>
            <person name="Baba T."/>
            <person name="Yuzawa H."/>
            <person name="Kobayashi I."/>
            <person name="Cui L."/>
            <person name="Oguchi A."/>
            <person name="Aoki K."/>
            <person name="Nagai Y."/>
            <person name="Lian J.-Q."/>
            <person name="Ito T."/>
            <person name="Kanamori M."/>
            <person name="Matsumaru H."/>
            <person name="Maruyama A."/>
            <person name="Murakami H."/>
            <person name="Hosoyama A."/>
            <person name="Mizutani-Ui Y."/>
            <person name="Takahashi N.K."/>
            <person name="Sawano T."/>
            <person name="Inoue R."/>
            <person name="Kaito C."/>
            <person name="Sekimizu K."/>
            <person name="Hirakawa H."/>
            <person name="Kuhara S."/>
            <person name="Goto S."/>
            <person name="Yabuzaki J."/>
            <person name="Kanehisa M."/>
            <person name="Yamashita A."/>
            <person name="Oshima K."/>
            <person name="Furuya K."/>
            <person name="Yoshino C."/>
            <person name="Shiba T."/>
            <person name="Hattori M."/>
            <person name="Ogasawara N."/>
            <person name="Hayashi H."/>
            <person name="Hiramatsu K."/>
        </authorList>
    </citation>
    <scope>NUCLEOTIDE SEQUENCE [LARGE SCALE GENOMIC DNA]</scope>
    <source>
        <strain>Mu50 / ATCC 700699</strain>
    </source>
</reference>
<evidence type="ECO:0000250" key="1"/>
<evidence type="ECO:0000255" key="2"/>
<evidence type="ECO:0000305" key="3"/>